<comment type="function">
    <text evidence="1">Catalyzes the condensation of iminoaspartate with dihydroxyacetone phosphate to form quinolinate.</text>
</comment>
<comment type="catalytic activity">
    <reaction evidence="1">
        <text>iminosuccinate + dihydroxyacetone phosphate = quinolinate + phosphate + 2 H2O + H(+)</text>
        <dbReference type="Rhea" id="RHEA:25888"/>
        <dbReference type="ChEBI" id="CHEBI:15377"/>
        <dbReference type="ChEBI" id="CHEBI:15378"/>
        <dbReference type="ChEBI" id="CHEBI:29959"/>
        <dbReference type="ChEBI" id="CHEBI:43474"/>
        <dbReference type="ChEBI" id="CHEBI:57642"/>
        <dbReference type="ChEBI" id="CHEBI:77875"/>
        <dbReference type="EC" id="2.5.1.72"/>
    </reaction>
    <physiologicalReaction direction="left-to-right" evidence="1">
        <dbReference type="Rhea" id="RHEA:25889"/>
    </physiologicalReaction>
</comment>
<comment type="cofactor">
    <cofactor evidence="1">
        <name>[4Fe-4S] cluster</name>
        <dbReference type="ChEBI" id="CHEBI:49883"/>
    </cofactor>
    <text evidence="1">Binds 1 [4Fe-4S] cluster per subunit.</text>
</comment>
<comment type="pathway">
    <text evidence="1">Cofactor biosynthesis; NAD(+) biosynthesis; quinolinate from iminoaspartate: step 1/1.</text>
</comment>
<comment type="subcellular location">
    <subcellularLocation>
        <location evidence="1">Cytoplasm</location>
    </subcellularLocation>
</comment>
<comment type="similarity">
    <text evidence="1">Belongs to the quinolinate synthase family. Type 1 subfamily.</text>
</comment>
<keyword id="KW-0004">4Fe-4S</keyword>
<keyword id="KW-0963">Cytoplasm</keyword>
<keyword id="KW-0408">Iron</keyword>
<keyword id="KW-0411">Iron-sulfur</keyword>
<keyword id="KW-0479">Metal-binding</keyword>
<keyword id="KW-0662">Pyridine nucleotide biosynthesis</keyword>
<keyword id="KW-0808">Transferase</keyword>
<accession>Q2NUL1</accession>
<name>NADA_SODGM</name>
<dbReference type="EC" id="2.5.1.72" evidence="1"/>
<dbReference type="EMBL" id="AP008232">
    <property type="protein sequence ID" value="BAE74164.1"/>
    <property type="molecule type" value="Genomic_DNA"/>
</dbReference>
<dbReference type="RefSeq" id="WP_011410726.1">
    <property type="nucleotide sequence ID" value="NC_007712.1"/>
</dbReference>
<dbReference type="SMR" id="Q2NUL1"/>
<dbReference type="STRING" id="343509.SG0889"/>
<dbReference type="KEGG" id="sgl:SG0889"/>
<dbReference type="eggNOG" id="COG0379">
    <property type="taxonomic scope" value="Bacteria"/>
</dbReference>
<dbReference type="HOGENOM" id="CLU_047382_1_0_6"/>
<dbReference type="OrthoDB" id="9801204at2"/>
<dbReference type="BioCyc" id="SGLO343509:SGP1_RS07590-MONOMER"/>
<dbReference type="UniPathway" id="UPA00253">
    <property type="reaction ID" value="UER00327"/>
</dbReference>
<dbReference type="Proteomes" id="UP000001932">
    <property type="component" value="Chromosome"/>
</dbReference>
<dbReference type="GO" id="GO:0005829">
    <property type="term" value="C:cytosol"/>
    <property type="evidence" value="ECO:0007669"/>
    <property type="project" value="TreeGrafter"/>
</dbReference>
<dbReference type="GO" id="GO:0051539">
    <property type="term" value="F:4 iron, 4 sulfur cluster binding"/>
    <property type="evidence" value="ECO:0007669"/>
    <property type="project" value="UniProtKB-KW"/>
</dbReference>
<dbReference type="GO" id="GO:0046872">
    <property type="term" value="F:metal ion binding"/>
    <property type="evidence" value="ECO:0007669"/>
    <property type="project" value="UniProtKB-KW"/>
</dbReference>
<dbReference type="GO" id="GO:0008987">
    <property type="term" value="F:quinolinate synthetase A activity"/>
    <property type="evidence" value="ECO:0007669"/>
    <property type="project" value="UniProtKB-UniRule"/>
</dbReference>
<dbReference type="GO" id="GO:0034628">
    <property type="term" value="P:'de novo' NAD biosynthetic process from L-aspartate"/>
    <property type="evidence" value="ECO:0007669"/>
    <property type="project" value="TreeGrafter"/>
</dbReference>
<dbReference type="FunFam" id="3.40.50.10800:FF:000003">
    <property type="entry name" value="Quinolinate synthase A"/>
    <property type="match status" value="1"/>
</dbReference>
<dbReference type="Gene3D" id="3.40.50.10800">
    <property type="entry name" value="NadA-like"/>
    <property type="match status" value="3"/>
</dbReference>
<dbReference type="HAMAP" id="MF_00567">
    <property type="entry name" value="NadA_type1"/>
    <property type="match status" value="1"/>
</dbReference>
<dbReference type="InterPro" id="IPR003473">
    <property type="entry name" value="NadA"/>
</dbReference>
<dbReference type="InterPro" id="IPR036094">
    <property type="entry name" value="NadA_sf"/>
</dbReference>
<dbReference type="InterPro" id="IPR023513">
    <property type="entry name" value="Quinolinate_synth_A_type1"/>
</dbReference>
<dbReference type="NCBIfam" id="TIGR00550">
    <property type="entry name" value="nadA"/>
    <property type="match status" value="1"/>
</dbReference>
<dbReference type="NCBIfam" id="NF006877">
    <property type="entry name" value="PRK09375.1-1"/>
    <property type="match status" value="1"/>
</dbReference>
<dbReference type="NCBIfam" id="NF006878">
    <property type="entry name" value="PRK09375.1-2"/>
    <property type="match status" value="1"/>
</dbReference>
<dbReference type="PANTHER" id="PTHR30573:SF0">
    <property type="entry name" value="QUINOLINATE SYNTHASE, CHLOROPLASTIC"/>
    <property type="match status" value="1"/>
</dbReference>
<dbReference type="PANTHER" id="PTHR30573">
    <property type="entry name" value="QUINOLINATE SYNTHETASE A"/>
    <property type="match status" value="1"/>
</dbReference>
<dbReference type="Pfam" id="PF02445">
    <property type="entry name" value="NadA"/>
    <property type="match status" value="1"/>
</dbReference>
<dbReference type="SUPFAM" id="SSF142754">
    <property type="entry name" value="NadA-like"/>
    <property type="match status" value="1"/>
</dbReference>
<organism>
    <name type="scientific">Sodalis glossinidius (strain morsitans)</name>
    <dbReference type="NCBI Taxonomy" id="343509"/>
    <lineage>
        <taxon>Bacteria</taxon>
        <taxon>Pseudomonadati</taxon>
        <taxon>Pseudomonadota</taxon>
        <taxon>Gammaproteobacteria</taxon>
        <taxon>Enterobacterales</taxon>
        <taxon>Bruguierivoracaceae</taxon>
        <taxon>Sodalis</taxon>
    </lineage>
</organism>
<evidence type="ECO:0000255" key="1">
    <source>
        <dbReference type="HAMAP-Rule" id="MF_00567"/>
    </source>
</evidence>
<reference key="1">
    <citation type="journal article" date="2006" name="Genome Res.">
        <title>Massive genome erosion and functional adaptations provide insights into the symbiotic lifestyle of Sodalis glossinidius in the tsetse host.</title>
        <authorList>
            <person name="Toh H."/>
            <person name="Weiss B.L."/>
            <person name="Perkin S.A.H."/>
            <person name="Yamashita A."/>
            <person name="Oshima K."/>
            <person name="Hattori M."/>
            <person name="Aksoy S."/>
        </authorList>
    </citation>
    <scope>NUCLEOTIDE SEQUENCE [LARGE SCALE GENOMIC DNA]</scope>
    <source>
        <strain>morsitans</strain>
    </source>
</reference>
<gene>
    <name evidence="1" type="primary">nadA</name>
    <name type="ordered locus">SG0889</name>
</gene>
<proteinExistence type="inferred from homology"/>
<feature type="chain" id="PRO_1000024976" description="Quinolinate synthase">
    <location>
        <begin position="1"/>
        <end position="348"/>
    </location>
</feature>
<feature type="binding site" evidence="1">
    <location>
        <position position="47"/>
    </location>
    <ligand>
        <name>iminosuccinate</name>
        <dbReference type="ChEBI" id="CHEBI:77875"/>
    </ligand>
</feature>
<feature type="binding site" evidence="1">
    <location>
        <position position="68"/>
    </location>
    <ligand>
        <name>iminosuccinate</name>
        <dbReference type="ChEBI" id="CHEBI:77875"/>
    </ligand>
</feature>
<feature type="binding site" evidence="1">
    <location>
        <position position="113"/>
    </location>
    <ligand>
        <name>[4Fe-4S] cluster</name>
        <dbReference type="ChEBI" id="CHEBI:49883"/>
    </ligand>
</feature>
<feature type="binding site" evidence="1">
    <location>
        <begin position="139"/>
        <end position="141"/>
    </location>
    <ligand>
        <name>iminosuccinate</name>
        <dbReference type="ChEBI" id="CHEBI:77875"/>
    </ligand>
</feature>
<feature type="binding site" evidence="1">
    <location>
        <position position="156"/>
    </location>
    <ligand>
        <name>iminosuccinate</name>
        <dbReference type="ChEBI" id="CHEBI:77875"/>
    </ligand>
</feature>
<feature type="binding site" evidence="1">
    <location>
        <position position="200"/>
    </location>
    <ligand>
        <name>[4Fe-4S] cluster</name>
        <dbReference type="ChEBI" id="CHEBI:49883"/>
    </ligand>
</feature>
<feature type="binding site" evidence="1">
    <location>
        <begin position="226"/>
        <end position="228"/>
    </location>
    <ligand>
        <name>iminosuccinate</name>
        <dbReference type="ChEBI" id="CHEBI:77875"/>
    </ligand>
</feature>
<feature type="binding site" evidence="1">
    <location>
        <position position="243"/>
    </location>
    <ligand>
        <name>iminosuccinate</name>
        <dbReference type="ChEBI" id="CHEBI:77875"/>
    </ligand>
</feature>
<feature type="binding site" evidence="1">
    <location>
        <position position="297"/>
    </location>
    <ligand>
        <name>[4Fe-4S] cluster</name>
        <dbReference type="ChEBI" id="CHEBI:49883"/>
    </ligand>
</feature>
<protein>
    <recommendedName>
        <fullName evidence="1">Quinolinate synthase</fullName>
        <ecNumber evidence="1">2.5.1.72</ecNumber>
    </recommendedName>
</protein>
<sequence>MSELIDDFATIYPFPPKPAALTEGEKAGLRDNIARLLKACNAVIVAHYYTDPEIQALAEATGGCVADSLEMARFGSSHPATTLLVAGVRFMGETAKILSPEKTVLMPTLHAECSLDLGCPEAEFSAFCDAHPDRTVVVYANTSAAVKARADWVVTSSIAVELIDHLDSLGEKIIWAPDRHLGRYVQKQTGADMLCWQSACIVHDEFKTQALRRMKRLYPDAAVLVHPESPQAVVDLADVVGSTSQLIQAAKTLKQQQMIVATDRGIFYKMQQACPEKNLLEAPTAGEGATCRSCAHCPWMAMNGLKAIAAGLERGGVEHDIRVDEAVRQRALVPLDRMLSFAADLKRC</sequence>